<accession>Q9A653</accession>
<reference key="1">
    <citation type="journal article" date="2001" name="Proc. Natl. Acad. Sci. U.S.A.">
        <title>Complete genome sequence of Caulobacter crescentus.</title>
        <authorList>
            <person name="Nierman W.C."/>
            <person name="Feldblyum T.V."/>
            <person name="Laub M.T."/>
            <person name="Paulsen I.T."/>
            <person name="Nelson K.E."/>
            <person name="Eisen J.A."/>
            <person name="Heidelberg J.F."/>
            <person name="Alley M.R.K."/>
            <person name="Ohta N."/>
            <person name="Maddock J.R."/>
            <person name="Potocka I."/>
            <person name="Nelson W.C."/>
            <person name="Newton A."/>
            <person name="Stephens C."/>
            <person name="Phadke N.D."/>
            <person name="Ely B."/>
            <person name="DeBoy R.T."/>
            <person name="Dodson R.J."/>
            <person name="Durkin A.S."/>
            <person name="Gwinn M.L."/>
            <person name="Haft D.H."/>
            <person name="Kolonay J.F."/>
            <person name="Smit J."/>
            <person name="Craven M.B."/>
            <person name="Khouri H.M."/>
            <person name="Shetty J."/>
            <person name="Berry K.J."/>
            <person name="Utterback T.R."/>
            <person name="Tran K."/>
            <person name="Wolf A.M."/>
            <person name="Vamathevan J.J."/>
            <person name="Ermolaeva M.D."/>
            <person name="White O."/>
            <person name="Salzberg S.L."/>
            <person name="Venter J.C."/>
            <person name="Shapiro L."/>
            <person name="Fraser C.M."/>
        </authorList>
    </citation>
    <scope>NUCLEOTIDE SEQUENCE [LARGE SCALE GENOMIC DNA]</scope>
    <source>
        <strain>ATCC 19089 / CIP 103742 / CB 15</strain>
    </source>
</reference>
<comment type="function">
    <text evidence="1">Reversibly catalyzes the transfer of the carbamoyl group from carbamoyl phosphate (CP) to the N(epsilon) atom of ornithine (ORN) to produce L-citrulline.</text>
</comment>
<comment type="catalytic activity">
    <reaction evidence="2">
        <text>carbamoyl phosphate + L-ornithine = L-citrulline + phosphate + H(+)</text>
        <dbReference type="Rhea" id="RHEA:19513"/>
        <dbReference type="ChEBI" id="CHEBI:15378"/>
        <dbReference type="ChEBI" id="CHEBI:43474"/>
        <dbReference type="ChEBI" id="CHEBI:46911"/>
        <dbReference type="ChEBI" id="CHEBI:57743"/>
        <dbReference type="ChEBI" id="CHEBI:58228"/>
        <dbReference type="EC" id="2.1.3.3"/>
    </reaction>
</comment>
<comment type="pathway">
    <text evidence="2">Amino-acid biosynthesis; L-arginine biosynthesis; L-arginine from L-ornithine and carbamoyl phosphate: step 1/3.</text>
</comment>
<comment type="subcellular location">
    <subcellularLocation>
        <location evidence="2">Cytoplasm</location>
    </subcellularLocation>
</comment>
<comment type="similarity">
    <text evidence="2">Belongs to the aspartate/ornithine carbamoyltransferase superfamily. OTCase family.</text>
</comment>
<name>OTC_CAUVC</name>
<proteinExistence type="inferred from homology"/>
<dbReference type="EC" id="2.1.3.3" evidence="2"/>
<dbReference type="EMBL" id="AE005673">
    <property type="protein sequence ID" value="AAK24213.1"/>
    <property type="molecule type" value="Genomic_DNA"/>
</dbReference>
<dbReference type="PIR" id="A87527">
    <property type="entry name" value="A87527"/>
</dbReference>
<dbReference type="RefSeq" id="NP_421045.1">
    <property type="nucleotide sequence ID" value="NC_002696.2"/>
</dbReference>
<dbReference type="RefSeq" id="WP_010920103.1">
    <property type="nucleotide sequence ID" value="NC_002696.2"/>
</dbReference>
<dbReference type="SMR" id="Q9A653"/>
<dbReference type="STRING" id="190650.CC_2242"/>
<dbReference type="EnsemblBacteria" id="AAK24213">
    <property type="protein sequence ID" value="AAK24213"/>
    <property type="gene ID" value="CC_2242"/>
</dbReference>
<dbReference type="KEGG" id="ccr:CC_2242"/>
<dbReference type="PATRIC" id="fig|190650.5.peg.2259"/>
<dbReference type="eggNOG" id="COG0078">
    <property type="taxonomic scope" value="Bacteria"/>
</dbReference>
<dbReference type="HOGENOM" id="CLU_043846_3_2_5"/>
<dbReference type="BioCyc" id="CAULO:CC2242-MONOMER"/>
<dbReference type="UniPathway" id="UPA00068">
    <property type="reaction ID" value="UER00112"/>
</dbReference>
<dbReference type="Proteomes" id="UP000001816">
    <property type="component" value="Chromosome"/>
</dbReference>
<dbReference type="GO" id="GO:0005737">
    <property type="term" value="C:cytoplasm"/>
    <property type="evidence" value="ECO:0007669"/>
    <property type="project" value="UniProtKB-SubCell"/>
</dbReference>
<dbReference type="GO" id="GO:0016597">
    <property type="term" value="F:amino acid binding"/>
    <property type="evidence" value="ECO:0007669"/>
    <property type="project" value="InterPro"/>
</dbReference>
<dbReference type="GO" id="GO:0004585">
    <property type="term" value="F:ornithine carbamoyltransferase activity"/>
    <property type="evidence" value="ECO:0007669"/>
    <property type="project" value="UniProtKB-UniRule"/>
</dbReference>
<dbReference type="GO" id="GO:0042450">
    <property type="term" value="P:arginine biosynthetic process via ornithine"/>
    <property type="evidence" value="ECO:0007669"/>
    <property type="project" value="TreeGrafter"/>
</dbReference>
<dbReference type="GO" id="GO:0019240">
    <property type="term" value="P:citrulline biosynthetic process"/>
    <property type="evidence" value="ECO:0007669"/>
    <property type="project" value="TreeGrafter"/>
</dbReference>
<dbReference type="GO" id="GO:0006526">
    <property type="term" value="P:L-arginine biosynthetic process"/>
    <property type="evidence" value="ECO:0007669"/>
    <property type="project" value="UniProtKB-UniRule"/>
</dbReference>
<dbReference type="FunFam" id="3.40.50.1370:FF:000008">
    <property type="entry name" value="Ornithine carbamoyltransferase"/>
    <property type="match status" value="1"/>
</dbReference>
<dbReference type="Gene3D" id="3.40.50.1370">
    <property type="entry name" value="Aspartate/ornithine carbamoyltransferase"/>
    <property type="match status" value="2"/>
</dbReference>
<dbReference type="HAMAP" id="MF_01109">
    <property type="entry name" value="OTCase"/>
    <property type="match status" value="1"/>
</dbReference>
<dbReference type="InterPro" id="IPR006132">
    <property type="entry name" value="Asp/Orn_carbamoyltranf_P-bd"/>
</dbReference>
<dbReference type="InterPro" id="IPR006130">
    <property type="entry name" value="Asp/Orn_carbamoylTrfase"/>
</dbReference>
<dbReference type="InterPro" id="IPR036901">
    <property type="entry name" value="Asp/Orn_carbamoylTrfase_sf"/>
</dbReference>
<dbReference type="InterPro" id="IPR006131">
    <property type="entry name" value="Asp_carbamoyltransf_Asp/Orn-bd"/>
</dbReference>
<dbReference type="InterPro" id="IPR002292">
    <property type="entry name" value="Orn/put_carbamltrans"/>
</dbReference>
<dbReference type="InterPro" id="IPR024904">
    <property type="entry name" value="OTCase_ArgI"/>
</dbReference>
<dbReference type="NCBIfam" id="TIGR00658">
    <property type="entry name" value="orni_carb_tr"/>
    <property type="match status" value="1"/>
</dbReference>
<dbReference type="NCBIfam" id="NF001986">
    <property type="entry name" value="PRK00779.1"/>
    <property type="match status" value="1"/>
</dbReference>
<dbReference type="PANTHER" id="PTHR45753">
    <property type="entry name" value="ORNITHINE CARBAMOYLTRANSFERASE, MITOCHONDRIAL"/>
    <property type="match status" value="1"/>
</dbReference>
<dbReference type="PANTHER" id="PTHR45753:SF3">
    <property type="entry name" value="ORNITHINE TRANSCARBAMYLASE, MITOCHONDRIAL"/>
    <property type="match status" value="1"/>
</dbReference>
<dbReference type="Pfam" id="PF00185">
    <property type="entry name" value="OTCace"/>
    <property type="match status" value="1"/>
</dbReference>
<dbReference type="Pfam" id="PF02729">
    <property type="entry name" value="OTCace_N"/>
    <property type="match status" value="1"/>
</dbReference>
<dbReference type="PRINTS" id="PR00100">
    <property type="entry name" value="AOTCASE"/>
</dbReference>
<dbReference type="PRINTS" id="PR00102">
    <property type="entry name" value="OTCASE"/>
</dbReference>
<dbReference type="SUPFAM" id="SSF53671">
    <property type="entry name" value="Aspartate/ornithine carbamoyltransferase"/>
    <property type="match status" value="1"/>
</dbReference>
<dbReference type="PROSITE" id="PS00097">
    <property type="entry name" value="CARBAMOYLTRANSFERASE"/>
    <property type="match status" value="1"/>
</dbReference>
<protein>
    <recommendedName>
        <fullName evidence="2">Ornithine carbamoyltransferase</fullName>
        <shortName evidence="2">OTCase</shortName>
        <ecNumber evidence="2">2.1.3.3</ecNumber>
    </recommendedName>
</protein>
<organism>
    <name type="scientific">Caulobacter vibrioides (strain ATCC 19089 / CIP 103742 / CB 15)</name>
    <name type="common">Caulobacter crescentus</name>
    <dbReference type="NCBI Taxonomy" id="190650"/>
    <lineage>
        <taxon>Bacteria</taxon>
        <taxon>Pseudomonadati</taxon>
        <taxon>Pseudomonadota</taxon>
        <taxon>Alphaproteobacteria</taxon>
        <taxon>Caulobacterales</taxon>
        <taxon>Caulobacteraceae</taxon>
        <taxon>Caulobacter</taxon>
    </lineage>
</organism>
<sequence>MTQPRHFIDLWKLDGATLRLLLDDAHARKAARKGWPQGKVDADAPAKDRVLSMIFQKNSTRTRFSFDAAMRQLGGSAIISTASDMQLGRGETIEDTAKVLSRMVDAVMIRANSHADVERFAQVSTVPIINGLTDKSHPCQIMADILTIEEHRGPIAGKTIAWVGDGNNVCSSFIHAAPLLGFELKIACPAVYHADLHDLARAEGLQGKVSMTTDPKAAVSGADVVVADTWVSMGDTDHDERLAALEPYQVDDRLMDLAAGNGVFLHCLPAHRGEEVTDAVLDGPRSLVWDEAENRIHAQKSVLAWCFGAIG</sequence>
<keyword id="KW-0028">Amino-acid biosynthesis</keyword>
<keyword id="KW-0055">Arginine biosynthesis</keyword>
<keyword id="KW-0963">Cytoplasm</keyword>
<keyword id="KW-1185">Reference proteome</keyword>
<keyword id="KW-0808">Transferase</keyword>
<evidence type="ECO:0000250" key="1"/>
<evidence type="ECO:0000255" key="2">
    <source>
        <dbReference type="HAMAP-Rule" id="MF_01109"/>
    </source>
</evidence>
<gene>
    <name evidence="2" type="primary">argF</name>
    <name type="ordered locus">CC_2242</name>
</gene>
<feature type="chain" id="PRO_0000112906" description="Ornithine carbamoyltransferase">
    <location>
        <begin position="1"/>
        <end position="311"/>
    </location>
</feature>
<feature type="binding site" evidence="2">
    <location>
        <begin position="59"/>
        <end position="62"/>
    </location>
    <ligand>
        <name>carbamoyl phosphate</name>
        <dbReference type="ChEBI" id="CHEBI:58228"/>
    </ligand>
</feature>
<feature type="binding site" evidence="2">
    <location>
        <position position="86"/>
    </location>
    <ligand>
        <name>carbamoyl phosphate</name>
        <dbReference type="ChEBI" id="CHEBI:58228"/>
    </ligand>
</feature>
<feature type="binding site" evidence="2">
    <location>
        <position position="110"/>
    </location>
    <ligand>
        <name>carbamoyl phosphate</name>
        <dbReference type="ChEBI" id="CHEBI:58228"/>
    </ligand>
</feature>
<feature type="binding site" evidence="2">
    <location>
        <begin position="137"/>
        <end position="140"/>
    </location>
    <ligand>
        <name>carbamoyl phosphate</name>
        <dbReference type="ChEBI" id="CHEBI:58228"/>
    </ligand>
</feature>
<feature type="binding site" evidence="2">
    <location>
        <position position="168"/>
    </location>
    <ligand>
        <name>L-ornithine</name>
        <dbReference type="ChEBI" id="CHEBI:46911"/>
    </ligand>
</feature>
<feature type="binding site" evidence="2">
    <location>
        <position position="228"/>
    </location>
    <ligand>
        <name>L-ornithine</name>
        <dbReference type="ChEBI" id="CHEBI:46911"/>
    </ligand>
</feature>
<feature type="binding site" evidence="2">
    <location>
        <begin position="232"/>
        <end position="233"/>
    </location>
    <ligand>
        <name>L-ornithine</name>
        <dbReference type="ChEBI" id="CHEBI:46911"/>
    </ligand>
</feature>
<feature type="binding site" evidence="2">
    <location>
        <begin position="267"/>
        <end position="268"/>
    </location>
    <ligand>
        <name>carbamoyl phosphate</name>
        <dbReference type="ChEBI" id="CHEBI:58228"/>
    </ligand>
</feature>
<feature type="binding site" evidence="2">
    <location>
        <position position="295"/>
    </location>
    <ligand>
        <name>carbamoyl phosphate</name>
        <dbReference type="ChEBI" id="CHEBI:58228"/>
    </ligand>
</feature>